<gene>
    <name evidence="3" type="primary">proR</name>
    <name evidence="6" type="synonym">prpA</name>
    <name evidence="6" type="ordered locus">PP_1258</name>
</gene>
<sequence length="308" mass="33663">MKQIHVIDSHTGGEPTRLVMKGFPQLRGRSMAEQRDELRELHDRWRRACLLEPRGNDVLVGALYCPPVSADATCGVIFFNNAGYLNMCGHGTIGLVASLQHMGLITPGVHKIDTPVGQVSATLHEDGAITVANVPSYRYRQQVAVDVPGHGVVRGDIAWGGNWFFLVSEHGQRIELDNREALTEYTWAMLKALETQGVTGENGAPIDHIELFADDPNADSRNFVMCPGKAYDRSPCGTGTSAKLACLAADGKLAEGQTWVQASITGSQFHGRYARDGERIRPFITGRAYMTADSTLLIDEQDPFAWGI</sequence>
<proteinExistence type="evidence at protein level"/>
<reference key="1">
    <citation type="journal article" date="2002" name="Environ. Microbiol.">
        <title>Complete genome sequence and comparative analysis of the metabolically versatile Pseudomonas putida KT2440.</title>
        <authorList>
            <person name="Nelson K.E."/>
            <person name="Weinel C."/>
            <person name="Paulsen I.T."/>
            <person name="Dodson R.J."/>
            <person name="Hilbert H."/>
            <person name="Martins dos Santos V.A.P."/>
            <person name="Fouts D.E."/>
            <person name="Gill S.R."/>
            <person name="Pop M."/>
            <person name="Holmes M."/>
            <person name="Brinkac L.M."/>
            <person name="Beanan M.J."/>
            <person name="DeBoy R.T."/>
            <person name="Daugherty S.C."/>
            <person name="Kolonay J.F."/>
            <person name="Madupu R."/>
            <person name="Nelson W.C."/>
            <person name="White O."/>
            <person name="Peterson J.D."/>
            <person name="Khouri H.M."/>
            <person name="Hance I."/>
            <person name="Chris Lee P."/>
            <person name="Holtzapple E.K."/>
            <person name="Scanlan D."/>
            <person name="Tran K."/>
            <person name="Moazzez A."/>
            <person name="Utterback T.R."/>
            <person name="Rizzo M."/>
            <person name="Lee K."/>
            <person name="Kosack D."/>
            <person name="Moestl D."/>
            <person name="Wedler H."/>
            <person name="Lauber J."/>
            <person name="Stjepandic D."/>
            <person name="Hoheisel J."/>
            <person name="Straetz M."/>
            <person name="Heim S."/>
            <person name="Kiewitz C."/>
            <person name="Eisen J.A."/>
            <person name="Timmis K.N."/>
            <person name="Duesterhoeft A."/>
            <person name="Tuemmler B."/>
            <person name="Fraser C.M."/>
        </authorList>
    </citation>
    <scope>NUCLEOTIDE SEQUENCE [LARGE SCALE GENOMIC DNA]</scope>
    <source>
        <strain>ATCC 47054 / DSM 6125 / CFBP 8728 / NCIMB 11950 / KT2440</strain>
    </source>
</reference>
<reference key="2">
    <citation type="journal article" date="2013" name="J. Bacteriol.">
        <title>Amino acid racemization in Pseudomonas putida KT2440.</title>
        <authorList>
            <person name="Radkov A.D."/>
            <person name="Moe L.A."/>
        </authorList>
    </citation>
    <scope>FUNCTION</scope>
    <scope>CATALYTIC ACTIVITY</scope>
    <scope>SUBSTRATE SPECIFICITY</scope>
    <scope>BIOPHYSICOCHEMICAL PROPERTIES</scope>
    <source>
        <strain>ATCC 47054 / DSM 6125 / CFBP 8728 / NCIMB 11950 / KT2440</strain>
    </source>
</reference>
<comment type="function">
    <text evidence="2">Catalyzes the reversible epimerization of cis-4-hydroxy-D-proline (c4DHyp) to trans-4-hydroxy-L-proline (t4LHyp). May be involved in a degradation pathway that allows P.putida strain KT2440 to grow on either epimer of 4-hydroxyproline, c4DHyp and t4LHyp, as the sole carbon and nitrogen source. Does not exhibit measureable racemase activity in vitro with any of the 19 natural chiral amino acid enantiomers.</text>
</comment>
<comment type="catalytic activity">
    <reaction evidence="2">
        <text>trans-4-hydroxy-L-proline = cis-4-hydroxy-D-proline</text>
        <dbReference type="Rhea" id="RHEA:21152"/>
        <dbReference type="ChEBI" id="CHEBI:57690"/>
        <dbReference type="ChEBI" id="CHEBI:58375"/>
        <dbReference type="EC" id="5.1.1.8"/>
    </reaction>
</comment>
<comment type="biophysicochemical properties">
    <kinetics>
        <KM evidence="2">5.26 mM for cis-4-hydroxy-D-proline</KM>
        <KM evidence="2">15.04 mM for trans-4-hydroxy-L-proline</KM>
        <text evidence="2">kcat is 69.63 sec(-1) for c4DHyp epimerization. kcat is 7.74 sec(-1) for t4LHyp epimerization.</text>
    </kinetics>
</comment>
<comment type="similarity">
    <text evidence="4">Belongs to the proline racemase family.</text>
</comment>
<dbReference type="EC" id="5.1.1.8" evidence="2"/>
<dbReference type="EMBL" id="AE015451">
    <property type="protein sequence ID" value="AAN66882.1"/>
    <property type="molecule type" value="Genomic_DNA"/>
</dbReference>
<dbReference type="RefSeq" id="NP_743418.1">
    <property type="nucleotide sequence ID" value="NC_002947.4"/>
</dbReference>
<dbReference type="RefSeq" id="WP_010952392.1">
    <property type="nucleotide sequence ID" value="NZ_CP169744.1"/>
</dbReference>
<dbReference type="SMR" id="Q88NF3"/>
<dbReference type="STRING" id="160488.PP_1258"/>
<dbReference type="PaxDb" id="160488-PP_1258"/>
<dbReference type="KEGG" id="ppu:PP_1258"/>
<dbReference type="PATRIC" id="fig|160488.4.peg.1334"/>
<dbReference type="eggNOG" id="COG3938">
    <property type="taxonomic scope" value="Bacteria"/>
</dbReference>
<dbReference type="HOGENOM" id="CLU_036729_1_0_6"/>
<dbReference type="OrthoDB" id="181267at2"/>
<dbReference type="PhylomeDB" id="Q88NF3"/>
<dbReference type="BioCyc" id="MetaCyc:G1G01-1345-MONOMER"/>
<dbReference type="BioCyc" id="PPUT160488:G1G01-1345-MONOMER"/>
<dbReference type="Proteomes" id="UP000000556">
    <property type="component" value="Chromosome"/>
</dbReference>
<dbReference type="GO" id="GO:0047580">
    <property type="term" value="F:4-hydroxyproline epimerase activity"/>
    <property type="evidence" value="ECO:0007669"/>
    <property type="project" value="UniProtKB-EC"/>
</dbReference>
<dbReference type="FunFam" id="3.10.310.10:FF:000012">
    <property type="entry name" value="4-hydroxyproline 2-epimerase"/>
    <property type="match status" value="1"/>
</dbReference>
<dbReference type="Gene3D" id="3.10.310.10">
    <property type="entry name" value="Diaminopimelate Epimerase, Chain A, domain 1"/>
    <property type="match status" value="2"/>
</dbReference>
<dbReference type="InterPro" id="IPR008794">
    <property type="entry name" value="Pro_racemase_fam"/>
</dbReference>
<dbReference type="NCBIfam" id="NF010577">
    <property type="entry name" value="PRK13970.1"/>
    <property type="match status" value="1"/>
</dbReference>
<dbReference type="PANTHER" id="PTHR33442">
    <property type="entry name" value="TRANS-3-HYDROXY-L-PROLINE DEHYDRATASE"/>
    <property type="match status" value="1"/>
</dbReference>
<dbReference type="PANTHER" id="PTHR33442:SF1">
    <property type="entry name" value="TRANS-3-HYDROXY-L-PROLINE DEHYDRATASE"/>
    <property type="match status" value="1"/>
</dbReference>
<dbReference type="Pfam" id="PF05544">
    <property type="entry name" value="Pro_racemase"/>
    <property type="match status" value="1"/>
</dbReference>
<dbReference type="PIRSF" id="PIRSF029792">
    <property type="entry name" value="Pro_racemase"/>
    <property type="match status" value="1"/>
</dbReference>
<dbReference type="SFLD" id="SFLDS00028">
    <property type="entry name" value="Proline_Racemase"/>
    <property type="match status" value="1"/>
</dbReference>
<dbReference type="SUPFAM" id="SSF54506">
    <property type="entry name" value="Diaminopimelate epimerase-like"/>
    <property type="match status" value="1"/>
</dbReference>
<organism>
    <name type="scientific">Pseudomonas putida (strain ATCC 47054 / DSM 6125 / CFBP 8728 / NCIMB 11950 / KT2440)</name>
    <dbReference type="NCBI Taxonomy" id="160488"/>
    <lineage>
        <taxon>Bacteria</taxon>
        <taxon>Pseudomonadati</taxon>
        <taxon>Pseudomonadota</taxon>
        <taxon>Gammaproteobacteria</taxon>
        <taxon>Pseudomonadales</taxon>
        <taxon>Pseudomonadaceae</taxon>
        <taxon>Pseudomonas</taxon>
    </lineage>
</organism>
<name>4HYPE_PSEPK</name>
<protein>
    <recommendedName>
        <fullName evidence="5">4-hydroxyproline 2-epimerase</fullName>
        <shortName evidence="3">4-hydroxyproline epimerase</shortName>
        <shortName>4Hyp 2-epimerase</shortName>
        <shortName>4HypE</shortName>
        <ecNumber evidence="2">5.1.1.8</ecNumber>
    </recommendedName>
</protein>
<evidence type="ECO:0000250" key="1">
    <source>
        <dbReference type="UniProtKB" id="Q4KGU2"/>
    </source>
</evidence>
<evidence type="ECO:0000269" key="2">
    <source>
    </source>
</evidence>
<evidence type="ECO:0000303" key="3">
    <source>
    </source>
</evidence>
<evidence type="ECO:0000305" key="4"/>
<evidence type="ECO:0000305" key="5">
    <source>
    </source>
</evidence>
<evidence type="ECO:0000312" key="6">
    <source>
        <dbReference type="EMBL" id="AAN66882.1"/>
    </source>
</evidence>
<accession>Q88NF3</accession>
<feature type="chain" id="PRO_0000446939" description="4-hydroxyproline 2-epimerase">
    <location>
        <begin position="1"/>
        <end position="308"/>
    </location>
</feature>
<feature type="active site" description="Proton acceptor" evidence="1">
    <location>
        <position position="88"/>
    </location>
</feature>
<feature type="active site" description="Proton donor" evidence="1">
    <location>
        <position position="236"/>
    </location>
</feature>
<feature type="binding site" evidence="1">
    <location>
        <begin position="89"/>
        <end position="90"/>
    </location>
    <ligand>
        <name>substrate</name>
    </ligand>
</feature>
<feature type="binding site" evidence="1">
    <location>
        <position position="208"/>
    </location>
    <ligand>
        <name>substrate</name>
    </ligand>
</feature>
<feature type="binding site" evidence="1">
    <location>
        <position position="232"/>
    </location>
    <ligand>
        <name>substrate</name>
    </ligand>
</feature>
<feature type="binding site" evidence="1">
    <location>
        <begin position="237"/>
        <end position="238"/>
    </location>
    <ligand>
        <name>substrate</name>
    </ligand>
</feature>
<keyword id="KW-0413">Isomerase</keyword>
<keyword id="KW-1185">Reference proteome</keyword>